<reference key="1">
    <citation type="submission" date="2006-12" db="EMBL/GenBank/DDBJ databases">
        <title>Complete sequence of chromosome 1 of Acidovorax sp. JS42.</title>
        <authorList>
            <person name="Copeland A."/>
            <person name="Lucas S."/>
            <person name="Lapidus A."/>
            <person name="Barry K."/>
            <person name="Detter J.C."/>
            <person name="Glavina del Rio T."/>
            <person name="Dalin E."/>
            <person name="Tice H."/>
            <person name="Pitluck S."/>
            <person name="Chertkov O."/>
            <person name="Brettin T."/>
            <person name="Bruce D."/>
            <person name="Han C."/>
            <person name="Tapia R."/>
            <person name="Gilna P."/>
            <person name="Schmutz J."/>
            <person name="Larimer F."/>
            <person name="Land M."/>
            <person name="Hauser L."/>
            <person name="Kyrpides N."/>
            <person name="Kim E."/>
            <person name="Stahl D."/>
            <person name="Richardson P."/>
        </authorList>
    </citation>
    <scope>NUCLEOTIDE SEQUENCE [LARGE SCALE GENOMIC DNA]</scope>
    <source>
        <strain>JS42</strain>
    </source>
</reference>
<accession>A1W897</accession>
<dbReference type="EC" id="3.4.21.88" evidence="1"/>
<dbReference type="EMBL" id="CP000539">
    <property type="protein sequence ID" value="ABM42472.1"/>
    <property type="molecule type" value="Genomic_DNA"/>
</dbReference>
<dbReference type="SMR" id="A1W897"/>
<dbReference type="STRING" id="232721.Ajs_2310"/>
<dbReference type="MEROPS" id="S24.001"/>
<dbReference type="KEGG" id="ajs:Ajs_2310"/>
<dbReference type="eggNOG" id="COG1974">
    <property type="taxonomic scope" value="Bacteria"/>
</dbReference>
<dbReference type="HOGENOM" id="CLU_066192_45_3_4"/>
<dbReference type="Proteomes" id="UP000000645">
    <property type="component" value="Chromosome"/>
</dbReference>
<dbReference type="GO" id="GO:0003677">
    <property type="term" value="F:DNA binding"/>
    <property type="evidence" value="ECO:0007669"/>
    <property type="project" value="UniProtKB-UniRule"/>
</dbReference>
<dbReference type="GO" id="GO:0004252">
    <property type="term" value="F:serine-type endopeptidase activity"/>
    <property type="evidence" value="ECO:0007669"/>
    <property type="project" value="UniProtKB-UniRule"/>
</dbReference>
<dbReference type="GO" id="GO:0006281">
    <property type="term" value="P:DNA repair"/>
    <property type="evidence" value="ECO:0007669"/>
    <property type="project" value="UniProtKB-UniRule"/>
</dbReference>
<dbReference type="GO" id="GO:0006260">
    <property type="term" value="P:DNA replication"/>
    <property type="evidence" value="ECO:0007669"/>
    <property type="project" value="UniProtKB-UniRule"/>
</dbReference>
<dbReference type="GO" id="GO:0045892">
    <property type="term" value="P:negative regulation of DNA-templated transcription"/>
    <property type="evidence" value="ECO:0007669"/>
    <property type="project" value="UniProtKB-UniRule"/>
</dbReference>
<dbReference type="GO" id="GO:0006508">
    <property type="term" value="P:proteolysis"/>
    <property type="evidence" value="ECO:0007669"/>
    <property type="project" value="InterPro"/>
</dbReference>
<dbReference type="GO" id="GO:0009432">
    <property type="term" value="P:SOS response"/>
    <property type="evidence" value="ECO:0007669"/>
    <property type="project" value="UniProtKB-UniRule"/>
</dbReference>
<dbReference type="CDD" id="cd06529">
    <property type="entry name" value="S24_LexA-like"/>
    <property type="match status" value="1"/>
</dbReference>
<dbReference type="FunFam" id="1.10.10.10:FF:000009">
    <property type="entry name" value="LexA repressor"/>
    <property type="match status" value="1"/>
</dbReference>
<dbReference type="FunFam" id="2.10.109.10:FF:000001">
    <property type="entry name" value="LexA repressor"/>
    <property type="match status" value="1"/>
</dbReference>
<dbReference type="Gene3D" id="2.10.109.10">
    <property type="entry name" value="Umud Fragment, subunit A"/>
    <property type="match status" value="1"/>
</dbReference>
<dbReference type="Gene3D" id="1.10.10.10">
    <property type="entry name" value="Winged helix-like DNA-binding domain superfamily/Winged helix DNA-binding domain"/>
    <property type="match status" value="1"/>
</dbReference>
<dbReference type="HAMAP" id="MF_00015">
    <property type="entry name" value="LexA"/>
    <property type="match status" value="1"/>
</dbReference>
<dbReference type="InterPro" id="IPR006200">
    <property type="entry name" value="LexA"/>
</dbReference>
<dbReference type="InterPro" id="IPR039418">
    <property type="entry name" value="LexA-like"/>
</dbReference>
<dbReference type="InterPro" id="IPR036286">
    <property type="entry name" value="LexA/Signal_pep-like_sf"/>
</dbReference>
<dbReference type="InterPro" id="IPR006199">
    <property type="entry name" value="LexA_DNA-bd_dom"/>
</dbReference>
<dbReference type="InterPro" id="IPR050077">
    <property type="entry name" value="LexA_repressor"/>
</dbReference>
<dbReference type="InterPro" id="IPR006197">
    <property type="entry name" value="Peptidase_S24_LexA"/>
</dbReference>
<dbReference type="InterPro" id="IPR015927">
    <property type="entry name" value="Peptidase_S24_S26A/B/C"/>
</dbReference>
<dbReference type="InterPro" id="IPR036388">
    <property type="entry name" value="WH-like_DNA-bd_sf"/>
</dbReference>
<dbReference type="InterPro" id="IPR036390">
    <property type="entry name" value="WH_DNA-bd_sf"/>
</dbReference>
<dbReference type="NCBIfam" id="TIGR00498">
    <property type="entry name" value="lexA"/>
    <property type="match status" value="1"/>
</dbReference>
<dbReference type="PANTHER" id="PTHR33516">
    <property type="entry name" value="LEXA REPRESSOR"/>
    <property type="match status" value="1"/>
</dbReference>
<dbReference type="PANTHER" id="PTHR33516:SF2">
    <property type="entry name" value="LEXA REPRESSOR-RELATED"/>
    <property type="match status" value="1"/>
</dbReference>
<dbReference type="Pfam" id="PF01726">
    <property type="entry name" value="LexA_DNA_bind"/>
    <property type="match status" value="1"/>
</dbReference>
<dbReference type="Pfam" id="PF00717">
    <property type="entry name" value="Peptidase_S24"/>
    <property type="match status" value="1"/>
</dbReference>
<dbReference type="PRINTS" id="PR00726">
    <property type="entry name" value="LEXASERPTASE"/>
</dbReference>
<dbReference type="SUPFAM" id="SSF51306">
    <property type="entry name" value="LexA/Signal peptidase"/>
    <property type="match status" value="1"/>
</dbReference>
<dbReference type="SUPFAM" id="SSF46785">
    <property type="entry name" value="Winged helix' DNA-binding domain"/>
    <property type="match status" value="1"/>
</dbReference>
<comment type="function">
    <text evidence="1">Represses a number of genes involved in the response to DNA damage (SOS response), including recA and lexA. In the presence of single-stranded DNA, RecA interacts with LexA causing an autocatalytic cleavage which disrupts the DNA-binding part of LexA, leading to derepression of the SOS regulon and eventually DNA repair.</text>
</comment>
<comment type="catalytic activity">
    <reaction evidence="1">
        <text>Hydrolysis of Ala-|-Gly bond in repressor LexA.</text>
        <dbReference type="EC" id="3.4.21.88"/>
    </reaction>
</comment>
<comment type="subunit">
    <text evidence="1">Homodimer.</text>
</comment>
<comment type="similarity">
    <text evidence="1">Belongs to the peptidase S24 family.</text>
</comment>
<proteinExistence type="inferred from homology"/>
<gene>
    <name evidence="1" type="primary">lexA</name>
    <name type="ordered locus">Ajs_2310</name>
</gene>
<name>LEXA_ACISJ</name>
<organism>
    <name type="scientific">Acidovorax sp. (strain JS42)</name>
    <dbReference type="NCBI Taxonomy" id="232721"/>
    <lineage>
        <taxon>Bacteria</taxon>
        <taxon>Pseudomonadati</taxon>
        <taxon>Pseudomonadota</taxon>
        <taxon>Betaproteobacteria</taxon>
        <taxon>Burkholderiales</taxon>
        <taxon>Comamonadaceae</taxon>
        <taxon>Acidovorax</taxon>
    </lineage>
</organism>
<feature type="chain" id="PRO_0000322711" description="LexA repressor">
    <location>
        <begin position="1"/>
        <end position="224"/>
    </location>
</feature>
<feature type="DNA-binding region" description="H-T-H motif" evidence="1">
    <location>
        <begin position="31"/>
        <end position="51"/>
    </location>
</feature>
<feature type="active site" description="For autocatalytic cleavage activity" evidence="1">
    <location>
        <position position="142"/>
    </location>
</feature>
<feature type="active site" description="For autocatalytic cleavage activity" evidence="1">
    <location>
        <position position="179"/>
    </location>
</feature>
<feature type="site" description="Cleavage; by autolysis" evidence="1">
    <location>
        <begin position="107"/>
        <end position="108"/>
    </location>
</feature>
<evidence type="ECO:0000255" key="1">
    <source>
        <dbReference type="HAMAP-Rule" id="MF_00015"/>
    </source>
</evidence>
<sequence length="224" mass="24186">MLDSPKLTARQQQILDLIQTAIARTGAPPTRAEIAAELGFKSANAAEEHLQALARKGVIELVSGTSRGIRLRGETVRNINAARGAQFNLPIPGLSQLTLPLVGRVAAGSPILAQEHVDQTYTVEGSLFAHKPDYLLKVRGMSMRDAGIMDGDLLAVQATREARNGQIIVARLGDDVTVKRLRRTGSAIELLPENPDYPVIRVEPGEPFEIEGLAVGLIRNTMLM</sequence>
<keyword id="KW-0068">Autocatalytic cleavage</keyword>
<keyword id="KW-0227">DNA damage</keyword>
<keyword id="KW-0234">DNA repair</keyword>
<keyword id="KW-0235">DNA replication</keyword>
<keyword id="KW-0238">DNA-binding</keyword>
<keyword id="KW-0378">Hydrolase</keyword>
<keyword id="KW-0678">Repressor</keyword>
<keyword id="KW-0742">SOS response</keyword>
<keyword id="KW-0804">Transcription</keyword>
<keyword id="KW-0805">Transcription regulation</keyword>
<protein>
    <recommendedName>
        <fullName evidence="1">LexA repressor</fullName>
        <ecNumber evidence="1">3.4.21.88</ecNumber>
    </recommendedName>
</protein>